<proteinExistence type="inferred from homology"/>
<reference key="1">
    <citation type="journal article" date="2009" name="PLoS Pathog.">
        <title>Molecular evolutionary consequences of niche restriction in Francisella tularensis, a facultative intracellular pathogen.</title>
        <authorList>
            <person name="Larsson P."/>
            <person name="Elfsmark D."/>
            <person name="Svensson K."/>
            <person name="Wikstroem P."/>
            <person name="Forsman M."/>
            <person name="Brettin T."/>
            <person name="Keim P."/>
            <person name="Johansson A."/>
        </authorList>
    </citation>
    <scope>NUCLEOTIDE SEQUENCE [LARGE SCALE GENOMIC DNA]</scope>
    <source>
        <strain>FSC147</strain>
    </source>
</reference>
<gene>
    <name evidence="1" type="primary">rpsC</name>
    <name type="ordered locus">FTM_1521</name>
</gene>
<sequence length="223" mass="24863">MGQKVNPNGIRLGYIRDWRSTWYADSSRYATKLNEDIKVREFLHKKLAAAAVSKIQIERPAQNAKITIHTARPGIVIGKKGDDVEKLRAEVHKLMGIPVQINIEEVRKPEIDAKLVAESVAQQLEKRVMFRRAMKKAMQAAMKSGAKGIKIMVSGRLGGAEIARSEWARDGRVPLQTFRADVDYATAEALTTYGVIGVKVWIYKGEILPGQIAEKKNNKKGAK</sequence>
<accession>B2SDX9</accession>
<name>RS3_FRATM</name>
<dbReference type="EMBL" id="CP000915">
    <property type="protein sequence ID" value="ACD31343.1"/>
    <property type="molecule type" value="Genomic_DNA"/>
</dbReference>
<dbReference type="SMR" id="B2SDX9"/>
<dbReference type="KEGG" id="ftm:FTM_1521"/>
<dbReference type="HOGENOM" id="CLU_058591_0_2_6"/>
<dbReference type="GO" id="GO:0022627">
    <property type="term" value="C:cytosolic small ribosomal subunit"/>
    <property type="evidence" value="ECO:0007669"/>
    <property type="project" value="TreeGrafter"/>
</dbReference>
<dbReference type="GO" id="GO:0003729">
    <property type="term" value="F:mRNA binding"/>
    <property type="evidence" value="ECO:0007669"/>
    <property type="project" value="UniProtKB-UniRule"/>
</dbReference>
<dbReference type="GO" id="GO:0019843">
    <property type="term" value="F:rRNA binding"/>
    <property type="evidence" value="ECO:0007669"/>
    <property type="project" value="UniProtKB-UniRule"/>
</dbReference>
<dbReference type="GO" id="GO:0003735">
    <property type="term" value="F:structural constituent of ribosome"/>
    <property type="evidence" value="ECO:0007669"/>
    <property type="project" value="InterPro"/>
</dbReference>
<dbReference type="GO" id="GO:0006412">
    <property type="term" value="P:translation"/>
    <property type="evidence" value="ECO:0007669"/>
    <property type="project" value="UniProtKB-UniRule"/>
</dbReference>
<dbReference type="CDD" id="cd02412">
    <property type="entry name" value="KH-II_30S_S3"/>
    <property type="match status" value="1"/>
</dbReference>
<dbReference type="FunFam" id="3.30.1140.32:FF:000001">
    <property type="entry name" value="30S ribosomal protein S3"/>
    <property type="match status" value="1"/>
</dbReference>
<dbReference type="FunFam" id="3.30.300.20:FF:000001">
    <property type="entry name" value="30S ribosomal protein S3"/>
    <property type="match status" value="1"/>
</dbReference>
<dbReference type="Gene3D" id="3.30.300.20">
    <property type="match status" value="1"/>
</dbReference>
<dbReference type="Gene3D" id="3.30.1140.32">
    <property type="entry name" value="Ribosomal protein S3, C-terminal domain"/>
    <property type="match status" value="1"/>
</dbReference>
<dbReference type="HAMAP" id="MF_01309_B">
    <property type="entry name" value="Ribosomal_uS3_B"/>
    <property type="match status" value="1"/>
</dbReference>
<dbReference type="InterPro" id="IPR004087">
    <property type="entry name" value="KH_dom"/>
</dbReference>
<dbReference type="InterPro" id="IPR015946">
    <property type="entry name" value="KH_dom-like_a/b"/>
</dbReference>
<dbReference type="InterPro" id="IPR004044">
    <property type="entry name" value="KH_dom_type_2"/>
</dbReference>
<dbReference type="InterPro" id="IPR009019">
    <property type="entry name" value="KH_sf_prok-type"/>
</dbReference>
<dbReference type="InterPro" id="IPR036419">
    <property type="entry name" value="Ribosomal_S3_C_sf"/>
</dbReference>
<dbReference type="InterPro" id="IPR005704">
    <property type="entry name" value="Ribosomal_uS3_bac-typ"/>
</dbReference>
<dbReference type="InterPro" id="IPR001351">
    <property type="entry name" value="Ribosomal_uS3_C"/>
</dbReference>
<dbReference type="InterPro" id="IPR018280">
    <property type="entry name" value="Ribosomal_uS3_CS"/>
</dbReference>
<dbReference type="NCBIfam" id="TIGR01009">
    <property type="entry name" value="rpsC_bact"/>
    <property type="match status" value="1"/>
</dbReference>
<dbReference type="PANTHER" id="PTHR11760">
    <property type="entry name" value="30S/40S RIBOSOMAL PROTEIN S3"/>
    <property type="match status" value="1"/>
</dbReference>
<dbReference type="PANTHER" id="PTHR11760:SF19">
    <property type="entry name" value="SMALL RIBOSOMAL SUBUNIT PROTEIN US3C"/>
    <property type="match status" value="1"/>
</dbReference>
<dbReference type="Pfam" id="PF07650">
    <property type="entry name" value="KH_2"/>
    <property type="match status" value="1"/>
</dbReference>
<dbReference type="Pfam" id="PF00189">
    <property type="entry name" value="Ribosomal_S3_C"/>
    <property type="match status" value="1"/>
</dbReference>
<dbReference type="SMART" id="SM00322">
    <property type="entry name" value="KH"/>
    <property type="match status" value="1"/>
</dbReference>
<dbReference type="SUPFAM" id="SSF54814">
    <property type="entry name" value="Prokaryotic type KH domain (KH-domain type II)"/>
    <property type="match status" value="1"/>
</dbReference>
<dbReference type="SUPFAM" id="SSF54821">
    <property type="entry name" value="Ribosomal protein S3 C-terminal domain"/>
    <property type="match status" value="1"/>
</dbReference>
<dbReference type="PROSITE" id="PS50823">
    <property type="entry name" value="KH_TYPE_2"/>
    <property type="match status" value="1"/>
</dbReference>
<dbReference type="PROSITE" id="PS00548">
    <property type="entry name" value="RIBOSOMAL_S3"/>
    <property type="match status" value="1"/>
</dbReference>
<comment type="function">
    <text evidence="1">Binds the lower part of the 30S subunit head. Binds mRNA in the 70S ribosome, positioning it for translation.</text>
</comment>
<comment type="subunit">
    <text evidence="1">Part of the 30S ribosomal subunit. Forms a tight complex with proteins S10 and S14.</text>
</comment>
<comment type="similarity">
    <text evidence="1">Belongs to the universal ribosomal protein uS3 family.</text>
</comment>
<evidence type="ECO:0000255" key="1">
    <source>
        <dbReference type="HAMAP-Rule" id="MF_01309"/>
    </source>
</evidence>
<evidence type="ECO:0000305" key="2"/>
<keyword id="KW-0687">Ribonucleoprotein</keyword>
<keyword id="KW-0689">Ribosomal protein</keyword>
<keyword id="KW-0694">RNA-binding</keyword>
<keyword id="KW-0699">rRNA-binding</keyword>
<feature type="chain" id="PRO_1000140973" description="Small ribosomal subunit protein uS3">
    <location>
        <begin position="1"/>
        <end position="223"/>
    </location>
</feature>
<feature type="domain" description="KH type-2" evidence="1">
    <location>
        <begin position="39"/>
        <end position="107"/>
    </location>
</feature>
<organism>
    <name type="scientific">Francisella tularensis subsp. mediasiatica (strain FSC147)</name>
    <dbReference type="NCBI Taxonomy" id="441952"/>
    <lineage>
        <taxon>Bacteria</taxon>
        <taxon>Pseudomonadati</taxon>
        <taxon>Pseudomonadota</taxon>
        <taxon>Gammaproteobacteria</taxon>
        <taxon>Thiotrichales</taxon>
        <taxon>Francisellaceae</taxon>
        <taxon>Francisella</taxon>
    </lineage>
</organism>
<protein>
    <recommendedName>
        <fullName evidence="1">Small ribosomal subunit protein uS3</fullName>
    </recommendedName>
    <alternativeName>
        <fullName evidence="2">30S ribosomal protein S3</fullName>
    </alternativeName>
</protein>